<organism>
    <name type="scientific">Brucella abortus (strain 2308)</name>
    <dbReference type="NCBI Taxonomy" id="359391"/>
    <lineage>
        <taxon>Bacteria</taxon>
        <taxon>Pseudomonadati</taxon>
        <taxon>Pseudomonadota</taxon>
        <taxon>Alphaproteobacteria</taxon>
        <taxon>Hyphomicrobiales</taxon>
        <taxon>Brucellaceae</taxon>
        <taxon>Brucella/Ochrobactrum group</taxon>
        <taxon>Brucella</taxon>
    </lineage>
</organism>
<proteinExistence type="inferred from homology"/>
<accession>Q2YNE1</accession>
<protein>
    <recommendedName>
        <fullName evidence="1">N-acetyl-gamma-glutamyl-phosphate reductase</fullName>
        <shortName evidence="1">AGPR</shortName>
        <ecNumber evidence="1">1.2.1.38</ecNumber>
    </recommendedName>
    <alternativeName>
        <fullName evidence="1">N-acetyl-glutamate semialdehyde dehydrogenase</fullName>
        <shortName evidence="1">NAGSA dehydrogenase</shortName>
    </alternativeName>
</protein>
<keyword id="KW-0028">Amino-acid biosynthesis</keyword>
<keyword id="KW-0055">Arginine biosynthesis</keyword>
<keyword id="KW-0963">Cytoplasm</keyword>
<keyword id="KW-0521">NADP</keyword>
<keyword id="KW-0560">Oxidoreductase</keyword>
<keyword id="KW-1185">Reference proteome</keyword>
<name>ARGC_BRUA2</name>
<sequence length="310" mass="33797">MKPKIFIDGEHGTTGLQIRTRLAERDDLEVISIPEAERRNKDLRADYLRAADIAILCLPDDASKEAVSLLEGHNSTRIIDTSTAHRVHPDWAYGFAELAKGQRERIAEARLVANPGCYPTGAIALVRPLRDAGLLPADYPVSVNAVSGYTGGGKQLIAQMEDRNHPDYLAANNFLYGLPLKHKHVPELQLHGRLDRRPIFSPSVGRFPQGMIVQVPLFLSELEGSPSLAKVHAVLTEHYAGQDIVEVVPLEESAKLPRVDAEELAGKDGMKLFVFGTEDHGQVNLVALLDNLGKGASGAAVQNMNLMLGK</sequence>
<feature type="chain" id="PRO_1000065138" description="N-acetyl-gamma-glutamyl-phosphate reductase">
    <location>
        <begin position="1"/>
        <end position="310"/>
    </location>
</feature>
<feature type="active site" evidence="1">
    <location>
        <position position="117"/>
    </location>
</feature>
<dbReference type="EC" id="1.2.1.38" evidence="1"/>
<dbReference type="EMBL" id="AM040264">
    <property type="protein sequence ID" value="CAJ10764.1"/>
    <property type="molecule type" value="Genomic_DNA"/>
</dbReference>
<dbReference type="RefSeq" id="WP_002963923.1">
    <property type="nucleotide sequence ID" value="NZ_KN046823.1"/>
</dbReference>
<dbReference type="SMR" id="Q2YNE1"/>
<dbReference type="STRING" id="359391.BAB1_0808"/>
<dbReference type="GeneID" id="93016823"/>
<dbReference type="KEGG" id="bmf:BAB1_0808"/>
<dbReference type="PATRIC" id="fig|359391.11.peg.3119"/>
<dbReference type="HOGENOM" id="CLU_077118_0_0_5"/>
<dbReference type="PhylomeDB" id="Q2YNE1"/>
<dbReference type="UniPathway" id="UPA00068">
    <property type="reaction ID" value="UER00108"/>
</dbReference>
<dbReference type="Proteomes" id="UP000002719">
    <property type="component" value="Chromosome I"/>
</dbReference>
<dbReference type="GO" id="GO:0005737">
    <property type="term" value="C:cytoplasm"/>
    <property type="evidence" value="ECO:0007669"/>
    <property type="project" value="UniProtKB-SubCell"/>
</dbReference>
<dbReference type="GO" id="GO:0003942">
    <property type="term" value="F:N-acetyl-gamma-glutamyl-phosphate reductase activity"/>
    <property type="evidence" value="ECO:0007669"/>
    <property type="project" value="UniProtKB-UniRule"/>
</dbReference>
<dbReference type="GO" id="GO:0051287">
    <property type="term" value="F:NAD binding"/>
    <property type="evidence" value="ECO:0007669"/>
    <property type="project" value="InterPro"/>
</dbReference>
<dbReference type="GO" id="GO:0006526">
    <property type="term" value="P:L-arginine biosynthetic process"/>
    <property type="evidence" value="ECO:0007669"/>
    <property type="project" value="UniProtKB-UniRule"/>
</dbReference>
<dbReference type="CDD" id="cd23935">
    <property type="entry name" value="AGPR_2_C"/>
    <property type="match status" value="1"/>
</dbReference>
<dbReference type="CDD" id="cd17896">
    <property type="entry name" value="AGPR_2_N"/>
    <property type="match status" value="1"/>
</dbReference>
<dbReference type="Gene3D" id="3.30.360.10">
    <property type="entry name" value="Dihydrodipicolinate Reductase, domain 2"/>
    <property type="match status" value="1"/>
</dbReference>
<dbReference type="Gene3D" id="3.40.50.720">
    <property type="entry name" value="NAD(P)-binding Rossmann-like Domain"/>
    <property type="match status" value="1"/>
</dbReference>
<dbReference type="HAMAP" id="MF_01110">
    <property type="entry name" value="ArgC_type2"/>
    <property type="match status" value="1"/>
</dbReference>
<dbReference type="InterPro" id="IPR023013">
    <property type="entry name" value="AGPR_AS"/>
</dbReference>
<dbReference type="InterPro" id="IPR010136">
    <property type="entry name" value="AGPR_type-2"/>
</dbReference>
<dbReference type="InterPro" id="IPR036291">
    <property type="entry name" value="NAD(P)-bd_dom_sf"/>
</dbReference>
<dbReference type="InterPro" id="IPR050085">
    <property type="entry name" value="NAGSA_dehydrogenase"/>
</dbReference>
<dbReference type="InterPro" id="IPR000534">
    <property type="entry name" value="Semialdehyde_DH_NAD-bd"/>
</dbReference>
<dbReference type="NCBIfam" id="TIGR01851">
    <property type="entry name" value="argC_other"/>
    <property type="match status" value="1"/>
</dbReference>
<dbReference type="PANTHER" id="PTHR32338:SF10">
    <property type="entry name" value="N-ACETYL-GAMMA-GLUTAMYL-PHOSPHATE REDUCTASE, CHLOROPLASTIC-RELATED"/>
    <property type="match status" value="1"/>
</dbReference>
<dbReference type="PANTHER" id="PTHR32338">
    <property type="entry name" value="N-ACETYL-GAMMA-GLUTAMYL-PHOSPHATE REDUCTASE, CHLOROPLASTIC-RELATED-RELATED"/>
    <property type="match status" value="1"/>
</dbReference>
<dbReference type="Pfam" id="PF01118">
    <property type="entry name" value="Semialdhyde_dh"/>
    <property type="match status" value="1"/>
</dbReference>
<dbReference type="Pfam" id="PF22698">
    <property type="entry name" value="Semialdhyde_dhC_1"/>
    <property type="match status" value="1"/>
</dbReference>
<dbReference type="SMART" id="SM00859">
    <property type="entry name" value="Semialdhyde_dh"/>
    <property type="match status" value="1"/>
</dbReference>
<dbReference type="SUPFAM" id="SSF55347">
    <property type="entry name" value="Glyceraldehyde-3-phosphate dehydrogenase-like, C-terminal domain"/>
    <property type="match status" value="1"/>
</dbReference>
<dbReference type="SUPFAM" id="SSF51735">
    <property type="entry name" value="NAD(P)-binding Rossmann-fold domains"/>
    <property type="match status" value="1"/>
</dbReference>
<dbReference type="PROSITE" id="PS01224">
    <property type="entry name" value="ARGC"/>
    <property type="match status" value="1"/>
</dbReference>
<gene>
    <name evidence="1" type="primary">argC</name>
    <name type="ordered locus">BAB1_0808</name>
</gene>
<comment type="function">
    <text evidence="1">Catalyzes the NADPH-dependent reduction of N-acetyl-5-glutamyl phosphate to yield N-acetyl-L-glutamate 5-semialdehyde.</text>
</comment>
<comment type="catalytic activity">
    <reaction evidence="1">
        <text>N-acetyl-L-glutamate 5-semialdehyde + phosphate + NADP(+) = N-acetyl-L-glutamyl 5-phosphate + NADPH + H(+)</text>
        <dbReference type="Rhea" id="RHEA:21588"/>
        <dbReference type="ChEBI" id="CHEBI:15378"/>
        <dbReference type="ChEBI" id="CHEBI:29123"/>
        <dbReference type="ChEBI" id="CHEBI:43474"/>
        <dbReference type="ChEBI" id="CHEBI:57783"/>
        <dbReference type="ChEBI" id="CHEBI:57936"/>
        <dbReference type="ChEBI" id="CHEBI:58349"/>
        <dbReference type="EC" id="1.2.1.38"/>
    </reaction>
</comment>
<comment type="pathway">
    <text evidence="1">Amino-acid biosynthesis; L-arginine biosynthesis; N(2)-acetyl-L-ornithine from L-glutamate: step 3/4.</text>
</comment>
<comment type="subcellular location">
    <subcellularLocation>
        <location evidence="1">Cytoplasm</location>
    </subcellularLocation>
</comment>
<comment type="similarity">
    <text evidence="1">Belongs to the NAGSA dehydrogenase family. Type 2 subfamily.</text>
</comment>
<reference key="1">
    <citation type="journal article" date="2005" name="Infect. Immun.">
        <title>Whole-genome analyses of speciation events in pathogenic Brucellae.</title>
        <authorList>
            <person name="Chain P.S."/>
            <person name="Comerci D.J."/>
            <person name="Tolmasky M.E."/>
            <person name="Larimer F.W."/>
            <person name="Malfatti S.A."/>
            <person name="Vergez L.M."/>
            <person name="Aguero F."/>
            <person name="Land M.L."/>
            <person name="Ugalde R.A."/>
            <person name="Garcia E."/>
        </authorList>
    </citation>
    <scope>NUCLEOTIDE SEQUENCE [LARGE SCALE GENOMIC DNA]</scope>
    <source>
        <strain>2308</strain>
    </source>
</reference>
<evidence type="ECO:0000255" key="1">
    <source>
        <dbReference type="HAMAP-Rule" id="MF_01110"/>
    </source>
</evidence>